<accession>C0HK89</accession>
<comment type="function">
    <text evidence="1">Peptide CPF-B1: Has antimicrobial activity against Gram-negative bacteria E.coli ATCC 25922 (MIC=5 uM) and multidrug-resistant A.baumannii (MIC=4-8 uM), against Gram-positive bacteria S.aureus ATCC 25923 (MIC=5 uM) and methicillin-resistant S.aureus and against fungus C.albicans ATCC 90028 (MIC=25 uM). Has some hemolytic activity against human erythrocytes at high concentrations.</text>
</comment>
<comment type="subcellular location">
    <subcellularLocation>
        <location evidence="1">Secreted</location>
    </subcellularLocation>
</comment>
<comment type="tissue specificity">
    <text evidence="4">Expressed by the skin glands.</text>
</comment>
<comment type="mass spectrometry">
    <molecule>Caerulein precursor fragment B1</molecule>
</comment>
<comment type="mass spectrometry">
    <molecule>Caerulein precursor fragment B2</molecule>
</comment>
<comment type="similarity">
    <text evidence="3">Belongs to the gastrin/cholecystokinin family.</text>
</comment>
<proteinExistence type="evidence at protein level"/>
<protein>
    <recommendedName>
        <fullName evidence="2">Caerulein precursor fragment B1</fullName>
        <shortName evidence="2">CPF-B1</shortName>
    </recommendedName>
    <component>
        <recommendedName>
            <fullName evidence="2">Caerulein precursor fragment B2</fullName>
            <shortName evidence="2">CPF-B2</shortName>
        </recommendedName>
    </component>
</protein>
<sequence>GLGSLLGKAFKIGLKTVGKMMGGAPREQ</sequence>
<keyword id="KW-0044">Antibiotic</keyword>
<keyword id="KW-0929">Antimicrobial</keyword>
<keyword id="KW-0204">Cytolysis</keyword>
<keyword id="KW-0903">Direct protein sequencing</keyword>
<keyword id="KW-0295">Fungicide</keyword>
<keyword id="KW-0354">Hemolysis</keyword>
<keyword id="KW-0964">Secreted</keyword>
<evidence type="ECO:0000269" key="1">
    <source>
    </source>
</evidence>
<evidence type="ECO:0000303" key="2">
    <source>
    </source>
</evidence>
<evidence type="ECO:0000305" key="3"/>
<evidence type="ECO:0000305" key="4">
    <source>
    </source>
</evidence>
<organism evidence="2">
    <name type="scientific">Xenopus borealis</name>
    <name type="common">Kenyan clawed frog</name>
    <dbReference type="NCBI Taxonomy" id="8354"/>
    <lineage>
        <taxon>Eukaryota</taxon>
        <taxon>Metazoa</taxon>
        <taxon>Chordata</taxon>
        <taxon>Craniata</taxon>
        <taxon>Vertebrata</taxon>
        <taxon>Euteleostomi</taxon>
        <taxon>Amphibia</taxon>
        <taxon>Batrachia</taxon>
        <taxon>Anura</taxon>
        <taxon>Pipoidea</taxon>
        <taxon>Pipidae</taxon>
        <taxon>Xenopodinae</taxon>
        <taxon>Xenopus</taxon>
        <taxon>Xenopus</taxon>
    </lineage>
</organism>
<reference evidence="3" key="1">
    <citation type="journal article" date="2010" name="Comp. Biochem. Physiol.">
        <title>Antimicrobial peptides with therapeutic potential from skin secretions of the Marsabit clawed frog Xenopus borealis (Pipidae).</title>
        <authorList>
            <person name="Mechkarska M."/>
            <person name="Ahmed E."/>
            <person name="Coquet L."/>
            <person name="Leprince J."/>
            <person name="Jouenne T."/>
            <person name="Vaudry H."/>
            <person name="King J.D."/>
            <person name="Conlon J.M."/>
        </authorList>
    </citation>
    <scope>PROTEIN SEQUENCE</scope>
    <scope>FUNCTION</scope>
    <scope>SUBCELLULAR LOCATION</scope>
    <scope>MASS SPECTROMETRY</scope>
    <source>
        <tissue evidence="2">Skin secretion</tissue>
    </source>
</reference>
<dbReference type="GO" id="GO:0005576">
    <property type="term" value="C:extracellular region"/>
    <property type="evidence" value="ECO:0007669"/>
    <property type="project" value="UniProtKB-SubCell"/>
</dbReference>
<dbReference type="GO" id="GO:0042742">
    <property type="term" value="P:defense response to bacterium"/>
    <property type="evidence" value="ECO:0007669"/>
    <property type="project" value="UniProtKB-KW"/>
</dbReference>
<dbReference type="GO" id="GO:0050832">
    <property type="term" value="P:defense response to fungus"/>
    <property type="evidence" value="ECO:0007669"/>
    <property type="project" value="UniProtKB-KW"/>
</dbReference>
<dbReference type="GO" id="GO:0031640">
    <property type="term" value="P:killing of cells of another organism"/>
    <property type="evidence" value="ECO:0007669"/>
    <property type="project" value="UniProtKB-KW"/>
</dbReference>
<feature type="peptide" id="PRO_0000438429" description="Caerulein precursor fragment B1" evidence="1">
    <location>
        <begin position="1"/>
        <end position="28"/>
    </location>
</feature>
<feature type="peptide" id="PRO_0000438430" description="Caerulein precursor fragment B2" evidence="1">
    <location>
        <begin position="1"/>
        <end position="26"/>
    </location>
</feature>
<name>CPFB1_XENBO</name>